<keyword id="KW-1185">Reference proteome</keyword>
<accession>Q00143</accession>
<feature type="chain" id="PRO_0000222121" description="Uncharacterized protein ORF39">
    <location>
        <begin position="1"/>
        <end position="1123"/>
    </location>
</feature>
<sequence>MEAIARLDSNALAKIGSGGTPFDSGLHSGVKWFIDNALRLREQFTGPNVRMETYGLSGPGLNMRDFGQKVIVPLLKISIGRYLNRAQAGNLAAFFRLISSTFKPASLPQAQTEFHMLFDITEQRVAQTGNLQTVGGGSTTTTYDIVMSLERKIVTTEIDSLELFYTNDPLVIAESITRELESMQTALDLSVILEHAKFCARQPLLGEMCGLREAARQNDLTDGAIIRACQLENIVCGSLNRSPKNLVSLLHTALKILDISPKDAAVVTTNTVFQNSSLDRRLVESQVGGSDEVYIYSVNGAVGMQPIAKFGKTVPPGEGLRAFNAPVPEVSPGVARSAYGGLKSVDDVMAIHLGNNETIPVIPLDSTKFSVYGNTSVETAMTQECIKRLFFTVGTCPNIYDSLEPGSFFGPSSGTGEEITPAMVAMRSPRSTYIMDLDRGDRVQEITLRQLHRVFLDGNKDAFDTSGFARKIARLTEALEKFNEAEVANLFLEPEWERKMADPGSIFEFDPRQMLIEIPDAEADDVLVVGVDTMNDRAYAAVPRTCMYNSSSLSMKHNEMIGVLSSMLQLVGQSSAITNYCQLVQTALSDTSAEGVEAVNNIRHMDLTGATPPLTRVMVDKITLRGGRYLPLSDPYCQLAIIKYFDDPAAITDVGNRVDVVQTVVNTIRAGFDAIVNVFKTIFDEPDFSIFSVNNMPKSICVTQALTATENLFMNIAYAAILPIFTDTLASMGGGMTVDTETNFNGMVFPVYRNACFIGSGATLPNQVKLWELTGVTKPLLVRAVWKCRTREIMKTFGGQNPFMGFLYHLHLSTLIDKTVILKHFDVKYYSGFSYLCVRTTRFTGHGLSVLPRKSARFITGNMYAGMPISEGTGKHAWTQCMELAVGPAGLDRLGLYIPNIFCTDIHGMGVDFNPRDMYAIAIFDAYNGFTPETKTTASPITNILALSGRYRVEGLGAPDPVTGLYSQCPTLVAGLGAGFDRLRSLVHRLNLPCDHAYAMILAAVDRGNVFETLPVIFSNVEYMRDLELLKRTVDATPADRNLYRETMGLIFADNYVIGKNGEHVFRANTKTVPPTIAALSPKVLGESLYNGAIYGDLEYGFSLKLAKYTGVTTSLRIDLNAV</sequence>
<dbReference type="EMBL" id="M75136">
    <property type="protein sequence ID" value="AAA88142.1"/>
    <property type="molecule type" value="Genomic_DNA"/>
</dbReference>
<dbReference type="PIR" id="D36790">
    <property type="entry name" value="D36790"/>
</dbReference>
<dbReference type="RefSeq" id="NP_041130.1">
    <property type="nucleotide sequence ID" value="NC_001493.2"/>
</dbReference>
<dbReference type="GeneID" id="1488390"/>
<dbReference type="KEGG" id="vg:1488390"/>
<dbReference type="Proteomes" id="UP000007643">
    <property type="component" value="Segment"/>
</dbReference>
<reference key="1">
    <citation type="journal article" date="1992" name="Virology">
        <title>Channel catfish virus: a new type of herpesvirus.</title>
        <authorList>
            <person name="Davison A.J."/>
        </authorList>
    </citation>
    <scope>NUCLEOTIDE SEQUENCE [LARGE SCALE GENOMIC DNA]</scope>
</reference>
<proteinExistence type="predicted"/>
<protein>
    <recommendedName>
        <fullName>Uncharacterized protein ORF39</fullName>
    </recommendedName>
</protein>
<gene>
    <name type="primary">ORF39</name>
</gene>
<organismHost>
    <name type="scientific">Ictaluridae</name>
    <name type="common">bullhead catfishes</name>
    <dbReference type="NCBI Taxonomy" id="7996"/>
</organismHost>
<organism>
    <name type="scientific">Ictalurid herpesvirus 1 (strain Auburn)</name>
    <name type="common">IcHV-1</name>
    <name type="synonym">Channel catfish herpesvirus</name>
    <dbReference type="NCBI Taxonomy" id="766178"/>
    <lineage>
        <taxon>Viruses</taxon>
        <taxon>Duplodnaviria</taxon>
        <taxon>Heunggongvirae</taxon>
        <taxon>Peploviricota</taxon>
        <taxon>Herviviricetes</taxon>
        <taxon>Herpesvirales</taxon>
        <taxon>Alloherpesviridae</taxon>
        <taxon>Ictavirus</taxon>
        <taxon>Ictavirus ictaluridallo1</taxon>
        <taxon>Ictalurid herpesvirus 1</taxon>
    </lineage>
</organism>
<name>VG39_ICHVA</name>